<accession>Q88PT7</accession>
<dbReference type="EC" id="2.1.1.172" evidence="1"/>
<dbReference type="EMBL" id="AE015451">
    <property type="protein sequence ID" value="AAN66386.1"/>
    <property type="molecule type" value="Genomic_DNA"/>
</dbReference>
<dbReference type="RefSeq" id="NP_742922.1">
    <property type="nucleotide sequence ID" value="NC_002947.4"/>
</dbReference>
<dbReference type="RefSeq" id="WP_010952002.1">
    <property type="nucleotide sequence ID" value="NZ_CP169744.1"/>
</dbReference>
<dbReference type="SMR" id="Q88PT7"/>
<dbReference type="STRING" id="160488.PP_0761"/>
<dbReference type="PaxDb" id="160488-PP_0761"/>
<dbReference type="DNASU" id="1044597"/>
<dbReference type="KEGG" id="ppu:PP_0761"/>
<dbReference type="PATRIC" id="fig|160488.4.peg.817"/>
<dbReference type="eggNOG" id="COG2813">
    <property type="taxonomic scope" value="Bacteria"/>
</dbReference>
<dbReference type="HOGENOM" id="CLU_049581_0_0_6"/>
<dbReference type="OrthoDB" id="9816072at2"/>
<dbReference type="PhylomeDB" id="Q88PT7"/>
<dbReference type="BioCyc" id="PPUT160488:G1G01-838-MONOMER"/>
<dbReference type="Proteomes" id="UP000000556">
    <property type="component" value="Chromosome"/>
</dbReference>
<dbReference type="GO" id="GO:0005737">
    <property type="term" value="C:cytoplasm"/>
    <property type="evidence" value="ECO:0007669"/>
    <property type="project" value="UniProtKB-SubCell"/>
</dbReference>
<dbReference type="GO" id="GO:0052914">
    <property type="term" value="F:16S rRNA (guanine(1207)-N(2))-methyltransferase activity"/>
    <property type="evidence" value="ECO:0007669"/>
    <property type="project" value="UniProtKB-EC"/>
</dbReference>
<dbReference type="GO" id="GO:0003676">
    <property type="term" value="F:nucleic acid binding"/>
    <property type="evidence" value="ECO:0007669"/>
    <property type="project" value="InterPro"/>
</dbReference>
<dbReference type="CDD" id="cd02440">
    <property type="entry name" value="AdoMet_MTases"/>
    <property type="match status" value="1"/>
</dbReference>
<dbReference type="Gene3D" id="3.40.50.150">
    <property type="entry name" value="Vaccinia Virus protein VP39"/>
    <property type="match status" value="2"/>
</dbReference>
<dbReference type="HAMAP" id="MF_01862">
    <property type="entry name" value="16SrRNA_methyltr_C"/>
    <property type="match status" value="1"/>
</dbReference>
<dbReference type="InterPro" id="IPR002052">
    <property type="entry name" value="DNA_methylase_N6_adenine_CS"/>
</dbReference>
<dbReference type="InterPro" id="IPR013675">
    <property type="entry name" value="Mtase_sm_N"/>
</dbReference>
<dbReference type="InterPro" id="IPR023543">
    <property type="entry name" value="rRNA_ssu_MeTfrase_C"/>
</dbReference>
<dbReference type="InterPro" id="IPR046977">
    <property type="entry name" value="RsmC/RlmG"/>
</dbReference>
<dbReference type="InterPro" id="IPR029063">
    <property type="entry name" value="SAM-dependent_MTases_sf"/>
</dbReference>
<dbReference type="InterPro" id="IPR007848">
    <property type="entry name" value="Small_mtfrase_dom"/>
</dbReference>
<dbReference type="PANTHER" id="PTHR47816">
    <property type="entry name" value="RIBOSOMAL RNA SMALL SUBUNIT METHYLTRANSFERASE C"/>
    <property type="match status" value="1"/>
</dbReference>
<dbReference type="PANTHER" id="PTHR47816:SF4">
    <property type="entry name" value="RIBOSOMAL RNA SMALL SUBUNIT METHYLTRANSFERASE C"/>
    <property type="match status" value="1"/>
</dbReference>
<dbReference type="Pfam" id="PF05175">
    <property type="entry name" value="MTS"/>
    <property type="match status" value="1"/>
</dbReference>
<dbReference type="Pfam" id="PF08468">
    <property type="entry name" value="MTS_N"/>
    <property type="match status" value="1"/>
</dbReference>
<dbReference type="SUPFAM" id="SSF53335">
    <property type="entry name" value="S-adenosyl-L-methionine-dependent methyltransferases"/>
    <property type="match status" value="1"/>
</dbReference>
<organism>
    <name type="scientific">Pseudomonas putida (strain ATCC 47054 / DSM 6125 / CFBP 8728 / NCIMB 11950 / KT2440)</name>
    <dbReference type="NCBI Taxonomy" id="160488"/>
    <lineage>
        <taxon>Bacteria</taxon>
        <taxon>Pseudomonadati</taxon>
        <taxon>Pseudomonadota</taxon>
        <taxon>Gammaproteobacteria</taxon>
        <taxon>Pseudomonadales</taxon>
        <taxon>Pseudomonadaceae</taxon>
        <taxon>Pseudomonas</taxon>
    </lineage>
</organism>
<proteinExistence type="inferred from homology"/>
<protein>
    <recommendedName>
        <fullName evidence="1">Ribosomal RNA small subunit methyltransferase C</fullName>
        <ecNumber evidence="1">2.1.1.172</ecNumber>
    </recommendedName>
    <alternativeName>
        <fullName evidence="1">16S rRNA m2G1207 methyltransferase</fullName>
    </alternativeName>
    <alternativeName>
        <fullName evidence="1">rRNA (guanine-N(2)-)-methyltransferase RsmC</fullName>
    </alternativeName>
</protein>
<reference key="1">
    <citation type="journal article" date="2002" name="Environ. Microbiol.">
        <title>Complete genome sequence and comparative analysis of the metabolically versatile Pseudomonas putida KT2440.</title>
        <authorList>
            <person name="Nelson K.E."/>
            <person name="Weinel C."/>
            <person name="Paulsen I.T."/>
            <person name="Dodson R.J."/>
            <person name="Hilbert H."/>
            <person name="Martins dos Santos V.A.P."/>
            <person name="Fouts D.E."/>
            <person name="Gill S.R."/>
            <person name="Pop M."/>
            <person name="Holmes M."/>
            <person name="Brinkac L.M."/>
            <person name="Beanan M.J."/>
            <person name="DeBoy R.T."/>
            <person name="Daugherty S.C."/>
            <person name="Kolonay J.F."/>
            <person name="Madupu R."/>
            <person name="Nelson W.C."/>
            <person name="White O."/>
            <person name="Peterson J.D."/>
            <person name="Khouri H.M."/>
            <person name="Hance I."/>
            <person name="Chris Lee P."/>
            <person name="Holtzapple E.K."/>
            <person name="Scanlan D."/>
            <person name="Tran K."/>
            <person name="Moazzez A."/>
            <person name="Utterback T.R."/>
            <person name="Rizzo M."/>
            <person name="Lee K."/>
            <person name="Kosack D."/>
            <person name="Moestl D."/>
            <person name="Wedler H."/>
            <person name="Lauber J."/>
            <person name="Stjepandic D."/>
            <person name="Hoheisel J."/>
            <person name="Straetz M."/>
            <person name="Heim S."/>
            <person name="Kiewitz C."/>
            <person name="Eisen J.A."/>
            <person name="Timmis K.N."/>
            <person name="Duesterhoeft A."/>
            <person name="Tuemmler B."/>
            <person name="Fraser C.M."/>
        </authorList>
    </citation>
    <scope>NUCLEOTIDE SEQUENCE [LARGE SCALE GENOMIC DNA]</scope>
    <source>
        <strain>ATCC 47054 / DSM 6125 / CFBP 8728 / NCIMB 11950 / KT2440</strain>
    </source>
</reference>
<keyword id="KW-0963">Cytoplasm</keyword>
<keyword id="KW-0489">Methyltransferase</keyword>
<keyword id="KW-1185">Reference proteome</keyword>
<keyword id="KW-0698">rRNA processing</keyword>
<keyword id="KW-0949">S-adenosyl-L-methionine</keyword>
<keyword id="KW-0808">Transferase</keyword>
<name>RSMC_PSEPK</name>
<sequence>MDPRSEVLLRQAELFQGPLLIAGAPADDLLGQLPQAQAWTWHAGDQAMLESRFAGRSHYGVEAPEAAFDSAVLFLPKSRELAAYLLNALASRLAGRELYLVGEKRGGIEGAAKQLQAFGKPRKLDSARHCQLWQVTIDQAPQAKPLESLAERFELALEDGPLQVVSLPGVFSHGRLDRGTALLLKHLDGLPGGHMLDFGCGAGVLGATLKRRYPQSRVTLLDVDAFAVAASRLTLAANGLEGEVISGDGIDAAPTELSLILSNPPFHTGVHTNYQASENLLKKSAVHLRKGGEMRLVANSFLRYQPLIEGALGNCQVRDEADGFRIYQATRG</sequence>
<gene>
    <name evidence="1" type="primary">rsmC</name>
    <name type="ordered locus">PP_0761</name>
</gene>
<evidence type="ECO:0000255" key="1">
    <source>
        <dbReference type="HAMAP-Rule" id="MF_01862"/>
    </source>
</evidence>
<comment type="function">
    <text evidence="1">Specifically methylates the guanine in position 1207 of 16S rRNA in the 30S particle.</text>
</comment>
<comment type="catalytic activity">
    <reaction evidence="1">
        <text>guanosine(1207) in 16S rRNA + S-adenosyl-L-methionine = N(2)-methylguanosine(1207) in 16S rRNA + S-adenosyl-L-homocysteine + H(+)</text>
        <dbReference type="Rhea" id="RHEA:42736"/>
        <dbReference type="Rhea" id="RHEA-COMP:10213"/>
        <dbReference type="Rhea" id="RHEA-COMP:10214"/>
        <dbReference type="ChEBI" id="CHEBI:15378"/>
        <dbReference type="ChEBI" id="CHEBI:57856"/>
        <dbReference type="ChEBI" id="CHEBI:59789"/>
        <dbReference type="ChEBI" id="CHEBI:74269"/>
        <dbReference type="ChEBI" id="CHEBI:74481"/>
        <dbReference type="EC" id="2.1.1.172"/>
    </reaction>
</comment>
<comment type="subunit">
    <text evidence="1">Monomer.</text>
</comment>
<comment type="subcellular location">
    <subcellularLocation>
        <location evidence="1">Cytoplasm</location>
    </subcellularLocation>
</comment>
<comment type="similarity">
    <text evidence="1">Belongs to the methyltransferase superfamily. RsmC family.</text>
</comment>
<feature type="chain" id="PRO_0000369744" description="Ribosomal RNA small subunit methyltransferase C">
    <location>
        <begin position="1"/>
        <end position="332"/>
    </location>
</feature>